<geneLocation type="chloroplast"/>
<evidence type="ECO:0000255" key="1">
    <source>
        <dbReference type="HAMAP-Rule" id="MF_00537"/>
    </source>
</evidence>
<evidence type="ECO:0000305" key="2"/>
<gene>
    <name evidence="1" type="primary">rps14</name>
</gene>
<feature type="chain" id="PRO_0000354423" description="Small ribosomal subunit protein uS14c">
    <location>
        <begin position="1"/>
        <end position="100"/>
    </location>
</feature>
<comment type="function">
    <text evidence="1">Binds 16S rRNA, required for the assembly of 30S particles.</text>
</comment>
<comment type="subunit">
    <text evidence="1">Part of the 30S ribosomal subunit.</text>
</comment>
<comment type="subcellular location">
    <subcellularLocation>
        <location>Plastid</location>
        <location>Chloroplast</location>
    </subcellularLocation>
</comment>
<comment type="similarity">
    <text evidence="1">Belongs to the universal ribosomal protein uS14 family.</text>
</comment>
<reference key="1">
    <citation type="journal article" date="2007" name="BMC Genomics">
        <title>The chloroplast genome sequence of the green alga Leptosira terrestris: multiple losses of the inverted repeat and extensive genome rearrangements within the Trebouxiophyceae.</title>
        <authorList>
            <person name="de Cambiaire J.-C."/>
            <person name="Otis C."/>
            <person name="Turmel M."/>
            <person name="Lemieux C."/>
        </authorList>
    </citation>
    <scope>NUCLEOTIDE SEQUENCE [LARGE SCALE GENOMIC DNA]</scope>
    <source>
        <strain>CCAP 463/2 / UTEX 333</strain>
    </source>
</reference>
<proteinExistence type="inferred from homology"/>
<sequence>MAKKSMIEREKKRQRLVIKYAQKRQQLKTELKTTSFLEQKVNLNRKLQQLPRNSFPVRLHNRCLITGRPKGYLRDFGLSRHVLREMAHECLLPGVTKSSW</sequence>
<protein>
    <recommendedName>
        <fullName evidence="1">Small ribosomal subunit protein uS14c</fullName>
    </recommendedName>
    <alternativeName>
        <fullName evidence="2">30S ribosomal protein S14, chloroplastic</fullName>
    </alternativeName>
</protein>
<name>RR14_PLETE</name>
<keyword id="KW-0150">Chloroplast</keyword>
<keyword id="KW-0934">Plastid</keyword>
<keyword id="KW-0687">Ribonucleoprotein</keyword>
<keyword id="KW-0689">Ribosomal protein</keyword>
<keyword id="KW-0694">RNA-binding</keyword>
<keyword id="KW-0699">rRNA-binding</keyword>
<organism>
    <name type="scientific">Pleurastrum terricola</name>
    <name type="common">Filamentous green alga</name>
    <name type="synonym">Leptosira terrestris</name>
    <dbReference type="NCBI Taxonomy" id="34116"/>
    <lineage>
        <taxon>Eukaryota</taxon>
        <taxon>Viridiplantae</taxon>
        <taxon>Chlorophyta</taxon>
        <taxon>core chlorophytes</taxon>
        <taxon>Chlorophyceae</taxon>
        <taxon>CS clade</taxon>
        <taxon>Chlamydomonadales</taxon>
        <taxon>Pleurastraceae</taxon>
        <taxon>Pleurastrum</taxon>
    </lineage>
</organism>
<dbReference type="EMBL" id="EF506945">
    <property type="protein sequence ID" value="ABO69328.1"/>
    <property type="molecule type" value="Genomic_DNA"/>
</dbReference>
<dbReference type="RefSeq" id="YP_001382191.1">
    <property type="nucleotide sequence ID" value="NC_009681.1"/>
</dbReference>
<dbReference type="SMR" id="A6YGB4"/>
<dbReference type="GeneID" id="5383813"/>
<dbReference type="GO" id="GO:0009507">
    <property type="term" value="C:chloroplast"/>
    <property type="evidence" value="ECO:0007669"/>
    <property type="project" value="UniProtKB-SubCell"/>
</dbReference>
<dbReference type="GO" id="GO:0015935">
    <property type="term" value="C:small ribosomal subunit"/>
    <property type="evidence" value="ECO:0007669"/>
    <property type="project" value="TreeGrafter"/>
</dbReference>
<dbReference type="GO" id="GO:0019843">
    <property type="term" value="F:rRNA binding"/>
    <property type="evidence" value="ECO:0007669"/>
    <property type="project" value="UniProtKB-UniRule"/>
</dbReference>
<dbReference type="GO" id="GO:0003735">
    <property type="term" value="F:structural constituent of ribosome"/>
    <property type="evidence" value="ECO:0007669"/>
    <property type="project" value="InterPro"/>
</dbReference>
<dbReference type="GO" id="GO:0006412">
    <property type="term" value="P:translation"/>
    <property type="evidence" value="ECO:0007669"/>
    <property type="project" value="UniProtKB-UniRule"/>
</dbReference>
<dbReference type="FunFam" id="1.10.287.1480:FF:000001">
    <property type="entry name" value="30S ribosomal protein S14"/>
    <property type="match status" value="1"/>
</dbReference>
<dbReference type="Gene3D" id="1.10.287.1480">
    <property type="match status" value="1"/>
</dbReference>
<dbReference type="HAMAP" id="MF_00537">
    <property type="entry name" value="Ribosomal_uS14_1"/>
    <property type="match status" value="1"/>
</dbReference>
<dbReference type="InterPro" id="IPR001209">
    <property type="entry name" value="Ribosomal_uS14"/>
</dbReference>
<dbReference type="InterPro" id="IPR023036">
    <property type="entry name" value="Ribosomal_uS14_bac/plastid"/>
</dbReference>
<dbReference type="InterPro" id="IPR018271">
    <property type="entry name" value="Ribosomal_uS14_CS"/>
</dbReference>
<dbReference type="NCBIfam" id="NF006477">
    <property type="entry name" value="PRK08881.1"/>
    <property type="match status" value="1"/>
</dbReference>
<dbReference type="PANTHER" id="PTHR19836">
    <property type="entry name" value="30S RIBOSOMAL PROTEIN S14"/>
    <property type="match status" value="1"/>
</dbReference>
<dbReference type="PANTHER" id="PTHR19836:SF19">
    <property type="entry name" value="SMALL RIBOSOMAL SUBUNIT PROTEIN US14M"/>
    <property type="match status" value="1"/>
</dbReference>
<dbReference type="Pfam" id="PF00253">
    <property type="entry name" value="Ribosomal_S14"/>
    <property type="match status" value="1"/>
</dbReference>
<dbReference type="SUPFAM" id="SSF57716">
    <property type="entry name" value="Glucocorticoid receptor-like (DNA-binding domain)"/>
    <property type="match status" value="1"/>
</dbReference>
<dbReference type="PROSITE" id="PS00527">
    <property type="entry name" value="RIBOSOMAL_S14"/>
    <property type="match status" value="1"/>
</dbReference>
<accession>A6YGB4</accession>